<dbReference type="EMBL" id="DS499594">
    <property type="protein sequence ID" value="EDP55482.1"/>
    <property type="molecule type" value="Genomic_DNA"/>
</dbReference>
<dbReference type="SMR" id="B0XM00"/>
<dbReference type="EnsemblFungi" id="EDP55482">
    <property type="protein sequence ID" value="EDP55482"/>
    <property type="gene ID" value="AFUB_001770"/>
</dbReference>
<dbReference type="VEuPathDB" id="FungiDB:AFUB_001770"/>
<dbReference type="HOGENOM" id="CLU_000288_57_15_1"/>
<dbReference type="OrthoDB" id="23846at5052"/>
<dbReference type="PhylomeDB" id="B0XM00"/>
<dbReference type="Proteomes" id="UP000001699">
    <property type="component" value="Unassembled WGS sequence"/>
</dbReference>
<dbReference type="GO" id="GO:0005737">
    <property type="term" value="C:cytoplasm"/>
    <property type="evidence" value="ECO:0007669"/>
    <property type="project" value="UniProtKB-UniRule"/>
</dbReference>
<dbReference type="GO" id="GO:0005874">
    <property type="term" value="C:microtubule"/>
    <property type="evidence" value="ECO:0007669"/>
    <property type="project" value="UniProtKB-KW"/>
</dbReference>
<dbReference type="GO" id="GO:0005875">
    <property type="term" value="C:microtubule associated complex"/>
    <property type="evidence" value="ECO:0007669"/>
    <property type="project" value="UniProtKB-UniRule"/>
</dbReference>
<dbReference type="GO" id="GO:0000922">
    <property type="term" value="C:spindle pole"/>
    <property type="evidence" value="ECO:0007669"/>
    <property type="project" value="UniProtKB-SubCell"/>
</dbReference>
<dbReference type="GO" id="GO:0070840">
    <property type="term" value="F:dynein complex binding"/>
    <property type="evidence" value="ECO:0007669"/>
    <property type="project" value="UniProtKB-UniRule"/>
</dbReference>
<dbReference type="GO" id="GO:0051301">
    <property type="term" value="P:cell division"/>
    <property type="evidence" value="ECO:0007669"/>
    <property type="project" value="UniProtKB-KW"/>
</dbReference>
<dbReference type="GO" id="GO:0000132">
    <property type="term" value="P:establishment of mitotic spindle orientation"/>
    <property type="evidence" value="ECO:0007669"/>
    <property type="project" value="UniProtKB-UniRule"/>
</dbReference>
<dbReference type="GO" id="GO:0051012">
    <property type="term" value="P:microtubule sliding"/>
    <property type="evidence" value="ECO:0007669"/>
    <property type="project" value="UniProtKB-UniRule"/>
</dbReference>
<dbReference type="CDD" id="cd00200">
    <property type="entry name" value="WD40"/>
    <property type="match status" value="1"/>
</dbReference>
<dbReference type="FunFam" id="1.20.960.30:FF:000002">
    <property type="entry name" value="Platelet-activating factor acetylhydrolase ib"/>
    <property type="match status" value="1"/>
</dbReference>
<dbReference type="Gene3D" id="1.20.960.30">
    <property type="match status" value="1"/>
</dbReference>
<dbReference type="Gene3D" id="2.130.10.10">
    <property type="entry name" value="YVTN repeat-like/Quinoprotein amine dehydrogenase"/>
    <property type="match status" value="1"/>
</dbReference>
<dbReference type="HAMAP" id="MF_03141">
    <property type="entry name" value="lis1"/>
    <property type="match status" value="1"/>
</dbReference>
<dbReference type="InterPro" id="IPR017252">
    <property type="entry name" value="Dynein_regulator_LIS1"/>
</dbReference>
<dbReference type="InterPro" id="IPR020472">
    <property type="entry name" value="G-protein_beta_WD-40_rep"/>
</dbReference>
<dbReference type="InterPro" id="IPR037190">
    <property type="entry name" value="LIS1_N"/>
</dbReference>
<dbReference type="InterPro" id="IPR006594">
    <property type="entry name" value="LisH"/>
</dbReference>
<dbReference type="InterPro" id="IPR056795">
    <property type="entry name" value="PAC1-like_LisH-like_dom"/>
</dbReference>
<dbReference type="InterPro" id="IPR015943">
    <property type="entry name" value="WD40/YVTN_repeat-like_dom_sf"/>
</dbReference>
<dbReference type="InterPro" id="IPR019775">
    <property type="entry name" value="WD40_repeat_CS"/>
</dbReference>
<dbReference type="InterPro" id="IPR036322">
    <property type="entry name" value="WD40_repeat_dom_sf"/>
</dbReference>
<dbReference type="InterPro" id="IPR001680">
    <property type="entry name" value="WD40_rpt"/>
</dbReference>
<dbReference type="InterPro" id="IPR050349">
    <property type="entry name" value="WD_LIS1/nudF_dynein_reg"/>
</dbReference>
<dbReference type="PANTHER" id="PTHR44129">
    <property type="entry name" value="WD REPEAT-CONTAINING PROTEIN POP1"/>
    <property type="match status" value="1"/>
</dbReference>
<dbReference type="Pfam" id="PF24951">
    <property type="entry name" value="LisH_PAC1"/>
    <property type="match status" value="1"/>
</dbReference>
<dbReference type="Pfam" id="PF00400">
    <property type="entry name" value="WD40"/>
    <property type="match status" value="6"/>
</dbReference>
<dbReference type="PIRSF" id="PIRSF037647">
    <property type="entry name" value="Dynein_regulator_Lis1"/>
    <property type="match status" value="1"/>
</dbReference>
<dbReference type="PRINTS" id="PR00320">
    <property type="entry name" value="GPROTEINBRPT"/>
</dbReference>
<dbReference type="SMART" id="SM00320">
    <property type="entry name" value="WD40"/>
    <property type="match status" value="7"/>
</dbReference>
<dbReference type="SUPFAM" id="SSF109925">
    <property type="entry name" value="Lissencephaly-1 protein (Lis-1, PAF-AH alpha) N-terminal domain"/>
    <property type="match status" value="1"/>
</dbReference>
<dbReference type="SUPFAM" id="SSF50978">
    <property type="entry name" value="WD40 repeat-like"/>
    <property type="match status" value="1"/>
</dbReference>
<dbReference type="PROSITE" id="PS50896">
    <property type="entry name" value="LISH"/>
    <property type="match status" value="1"/>
</dbReference>
<dbReference type="PROSITE" id="PS00678">
    <property type="entry name" value="WD_REPEATS_1"/>
    <property type="match status" value="1"/>
</dbReference>
<dbReference type="PROSITE" id="PS50082">
    <property type="entry name" value="WD_REPEATS_2"/>
    <property type="match status" value="6"/>
</dbReference>
<dbReference type="PROSITE" id="PS50294">
    <property type="entry name" value="WD_REPEATS_REGION"/>
    <property type="match status" value="1"/>
</dbReference>
<accession>B0XM00</accession>
<reference key="1">
    <citation type="journal article" date="2008" name="PLoS Genet.">
        <title>Genomic islands in the pathogenic filamentous fungus Aspergillus fumigatus.</title>
        <authorList>
            <person name="Fedorova N.D."/>
            <person name="Khaldi N."/>
            <person name="Joardar V.S."/>
            <person name="Maiti R."/>
            <person name="Amedeo P."/>
            <person name="Anderson M.J."/>
            <person name="Crabtree J."/>
            <person name="Silva J.C."/>
            <person name="Badger J.H."/>
            <person name="Albarraq A."/>
            <person name="Angiuoli S."/>
            <person name="Bussey H."/>
            <person name="Bowyer P."/>
            <person name="Cotty P.J."/>
            <person name="Dyer P.S."/>
            <person name="Egan A."/>
            <person name="Galens K."/>
            <person name="Fraser-Liggett C.M."/>
            <person name="Haas B.J."/>
            <person name="Inman J.M."/>
            <person name="Kent R."/>
            <person name="Lemieux S."/>
            <person name="Malavazi I."/>
            <person name="Orvis J."/>
            <person name="Roemer T."/>
            <person name="Ronning C.M."/>
            <person name="Sundaram J.P."/>
            <person name="Sutton G."/>
            <person name="Turner G."/>
            <person name="Venter J.C."/>
            <person name="White O.R."/>
            <person name="Whitty B.R."/>
            <person name="Youngman P."/>
            <person name="Wolfe K.H."/>
            <person name="Goldman G.H."/>
            <person name="Wortman J.R."/>
            <person name="Jiang B."/>
            <person name="Denning D.W."/>
            <person name="Nierman W.C."/>
        </authorList>
    </citation>
    <scope>NUCLEOTIDE SEQUENCE [LARGE SCALE GENOMIC DNA]</scope>
    <source>
        <strain>CBS 144.89 / FGSC A1163 / CEA10</strain>
    </source>
</reference>
<evidence type="ECO:0000255" key="1">
    <source>
        <dbReference type="HAMAP-Rule" id="MF_03141"/>
    </source>
</evidence>
<evidence type="ECO:0000256" key="2">
    <source>
        <dbReference type="SAM" id="MobiDB-lite"/>
    </source>
</evidence>
<name>LIS1_ASPFC</name>
<gene>
    <name evidence="1" type="primary">nudF</name>
    <name evidence="1" type="synonym">lis1</name>
    <name type="ORF">AFUB_001770</name>
</gene>
<proteinExistence type="inferred from homology"/>
<keyword id="KW-0131">Cell cycle</keyword>
<keyword id="KW-0132">Cell division</keyword>
<keyword id="KW-0175">Coiled coil</keyword>
<keyword id="KW-0963">Cytoplasm</keyword>
<keyword id="KW-0206">Cytoskeleton</keyword>
<keyword id="KW-0493">Microtubule</keyword>
<keyword id="KW-0498">Mitosis</keyword>
<keyword id="KW-0677">Repeat</keyword>
<keyword id="KW-0813">Transport</keyword>
<keyword id="KW-0853">WD repeat</keyword>
<comment type="function">
    <text evidence="1">Positively regulates the activity of the minus-end directed microtubule motor protein dynein. May enhance dynein-mediated microtubule sliding by targeting dynein to the microtubule plus end. Required for nuclear migration during vegetative growth as well as development. Required for retrograde early endosome (EE) transport from the hyphal tip. Required for localization of dynein to the mitotic spindle poles. Recruits additional proteins to the dynein complex at SPBs.</text>
</comment>
<comment type="subunit">
    <text evidence="1">Self-associates. Interacts with nudE and dynein.</text>
</comment>
<comment type="subcellular location">
    <subcellularLocation>
        <location evidence="1">Cytoplasm</location>
        <location evidence="1">Cytoskeleton</location>
    </subcellularLocation>
    <subcellularLocation>
        <location evidence="1">Cytoplasm</location>
        <location evidence="1">Cytoskeleton</location>
        <location evidence="1">Spindle pole</location>
    </subcellularLocation>
    <text evidence="1">Localizes to the plus ends of microtubules at the hyphal tip and the mitotic spindle poles.</text>
</comment>
<comment type="domain">
    <text evidence="1">Dimerization mediated by the LisH domain may be required to activate dynein.</text>
</comment>
<comment type="similarity">
    <text evidence="1">Belongs to the WD repeat LIS1/nudF family.</text>
</comment>
<organism>
    <name type="scientific">Aspergillus fumigatus (strain CBS 144.89 / FGSC A1163 / CEA10)</name>
    <name type="common">Neosartorya fumigata</name>
    <dbReference type="NCBI Taxonomy" id="451804"/>
    <lineage>
        <taxon>Eukaryota</taxon>
        <taxon>Fungi</taxon>
        <taxon>Dikarya</taxon>
        <taxon>Ascomycota</taxon>
        <taxon>Pezizomycotina</taxon>
        <taxon>Eurotiomycetes</taxon>
        <taxon>Eurotiomycetidae</taxon>
        <taxon>Eurotiales</taxon>
        <taxon>Aspergillaceae</taxon>
        <taxon>Aspergillus</taxon>
        <taxon>Aspergillus subgen. Fumigati</taxon>
    </lineage>
</organism>
<feature type="chain" id="PRO_0000405069" description="Nuclear distribution protein nudF">
    <location>
        <begin position="1"/>
        <end position="467"/>
    </location>
</feature>
<feature type="domain" description="LisH" evidence="1">
    <location>
        <begin position="9"/>
        <end position="41"/>
    </location>
</feature>
<feature type="repeat" description="WD 1">
    <location>
        <begin position="113"/>
        <end position="154"/>
    </location>
</feature>
<feature type="repeat" description="WD 2">
    <location>
        <begin position="156"/>
        <end position="196"/>
    </location>
</feature>
<feature type="repeat" description="WD 3">
    <location>
        <begin position="200"/>
        <end position="247"/>
    </location>
</feature>
<feature type="repeat" description="WD 4">
    <location>
        <begin position="250"/>
        <end position="289"/>
    </location>
</feature>
<feature type="repeat" description="WD 5">
    <location>
        <begin position="292"/>
        <end position="352"/>
    </location>
</feature>
<feature type="repeat" description="WD 6">
    <location>
        <begin position="354"/>
        <end position="393"/>
    </location>
</feature>
<feature type="repeat" description="WD 7">
    <location>
        <begin position="398"/>
        <end position="428"/>
    </location>
</feature>
<feature type="repeat" description="WD 8">
    <location>
        <begin position="429"/>
        <end position="466"/>
    </location>
</feature>
<feature type="region of interest" description="Disordered" evidence="2">
    <location>
        <begin position="417"/>
        <end position="439"/>
    </location>
</feature>
<feature type="coiled-coil region" evidence="1">
    <location>
        <begin position="60"/>
        <end position="87"/>
    </location>
</feature>
<feature type="compositionally biased region" description="Polar residues" evidence="2">
    <location>
        <begin position="422"/>
        <end position="436"/>
    </location>
</feature>
<protein>
    <recommendedName>
        <fullName evidence="1">Nuclear distribution protein nudF</fullName>
    </recommendedName>
    <alternativeName>
        <fullName evidence="1">Lissencephaly-1 homolog</fullName>
        <shortName evidence="1">LIS-1</shortName>
    </alternativeName>
</protein>
<sequence>MSQLLTARQAEELHKSIIAYLASVNLTESSAALRAELGDSVSIDDATLKKYEGLLEKKWTSVVRLQKKIMDLESRCAALQSELDSATPTSLLRKNQDPTSWLPRSPARHILEGHRNPVTCVAFHPVFSSLASGSDDTTIKIWDWELGELERTVKGHTKAVLDVDYGGPRGGTLLASCSSDLTIKLWDPSDNYKNIRTLPGHDHSVSSVRFIPSGAAGSPMSGNLLVSASRDKTLRIWDVTTGYCVKTLSGHVDWVRAVAPSIDGRFLLAAGDDRIPRLWDLSSAETKSTFLGHEHVIECVAIAPAASYPHLAVLSGLKKPPPASSSAEFFATGSRDKTIRLWDSRGNLIKTLVGHDNWVRALAFHPGGKHLLSVADDKTIRCWDLTQECKCVRVISDAHGHFVTCLRWAPPLIKDGGANGEAETNGTPAATSTTNGVRPDPNVATKISIRCVIATGSVDQKVRIFAT</sequence>